<reference key="1">
    <citation type="journal article" date="2009" name="Genome Biol.">
        <title>Genomic and genetic analyses of diversity and plant interactions of Pseudomonas fluorescens.</title>
        <authorList>
            <person name="Silby M.W."/>
            <person name="Cerdeno-Tarraga A.M."/>
            <person name="Vernikos G.S."/>
            <person name="Giddens S.R."/>
            <person name="Jackson R.W."/>
            <person name="Preston G.M."/>
            <person name="Zhang X.-X."/>
            <person name="Moon C.D."/>
            <person name="Gehrig S.M."/>
            <person name="Godfrey S.A.C."/>
            <person name="Knight C.G."/>
            <person name="Malone J.G."/>
            <person name="Robinson Z."/>
            <person name="Spiers A.J."/>
            <person name="Harris S."/>
            <person name="Challis G.L."/>
            <person name="Yaxley A.M."/>
            <person name="Harris D."/>
            <person name="Seeger K."/>
            <person name="Murphy L."/>
            <person name="Rutter S."/>
            <person name="Squares R."/>
            <person name="Quail M.A."/>
            <person name="Saunders E."/>
            <person name="Mavromatis K."/>
            <person name="Brettin T.S."/>
            <person name="Bentley S.D."/>
            <person name="Hothersall J."/>
            <person name="Stephens E."/>
            <person name="Thomas C.M."/>
            <person name="Parkhill J."/>
            <person name="Levy S.B."/>
            <person name="Rainey P.B."/>
            <person name="Thomson N.R."/>
        </authorList>
    </citation>
    <scope>NUCLEOTIDE SEQUENCE [LARGE SCALE GENOMIC DNA]</scope>
    <source>
        <strain>Pf0-1</strain>
    </source>
</reference>
<comment type="function">
    <text evidence="1">Catalyzes the transfer of 4-deoxy-4-formamido-L-arabinose from UDP to undecaprenyl phosphate. The modified arabinose is attached to lipid A and is required for resistance to polymyxin and cationic antimicrobial peptides.</text>
</comment>
<comment type="catalytic activity">
    <reaction evidence="1">
        <text>UDP-4-deoxy-4-formamido-beta-L-arabinose + di-trans,octa-cis-undecaprenyl phosphate = 4-deoxy-4-formamido-alpha-L-arabinopyranosyl di-trans,octa-cis-undecaprenyl phosphate + UDP</text>
        <dbReference type="Rhea" id="RHEA:27722"/>
        <dbReference type="ChEBI" id="CHEBI:58223"/>
        <dbReference type="ChEBI" id="CHEBI:58709"/>
        <dbReference type="ChEBI" id="CHEBI:58909"/>
        <dbReference type="ChEBI" id="CHEBI:60392"/>
        <dbReference type="EC" id="2.4.2.53"/>
    </reaction>
</comment>
<comment type="pathway">
    <text evidence="1">Glycolipid biosynthesis; 4-amino-4-deoxy-alpha-L-arabinose undecaprenyl phosphate biosynthesis; 4-amino-4-deoxy-alpha-L-arabinose undecaprenyl phosphate from UDP-4-deoxy-4-formamido-beta-L-arabinose and undecaprenyl phosphate: step 1/2.</text>
</comment>
<comment type="pathway">
    <text evidence="1">Bacterial outer membrane biogenesis; lipopolysaccharide biosynthesis.</text>
</comment>
<comment type="subcellular location">
    <subcellularLocation>
        <location evidence="1">Cell inner membrane</location>
        <topology evidence="1">Multi-pass membrane protein</topology>
    </subcellularLocation>
</comment>
<comment type="similarity">
    <text evidence="1">Belongs to the glycosyltransferase 2 family.</text>
</comment>
<dbReference type="EC" id="2.4.2.53" evidence="1"/>
<dbReference type="EMBL" id="CP000094">
    <property type="protein sequence ID" value="ABA74583.1"/>
    <property type="molecule type" value="Genomic_DNA"/>
</dbReference>
<dbReference type="RefSeq" id="WP_011334254.1">
    <property type="nucleotide sequence ID" value="NC_007492.2"/>
</dbReference>
<dbReference type="SMR" id="Q3KCC2"/>
<dbReference type="CAZy" id="GT2">
    <property type="family name" value="Glycosyltransferase Family 2"/>
</dbReference>
<dbReference type="KEGG" id="pfo:Pfl01_2842"/>
<dbReference type="eggNOG" id="COG0463">
    <property type="taxonomic scope" value="Bacteria"/>
</dbReference>
<dbReference type="HOGENOM" id="CLU_033536_0_0_6"/>
<dbReference type="UniPathway" id="UPA00030"/>
<dbReference type="UniPathway" id="UPA00036">
    <property type="reaction ID" value="UER00495"/>
</dbReference>
<dbReference type="Proteomes" id="UP000002704">
    <property type="component" value="Chromosome"/>
</dbReference>
<dbReference type="GO" id="GO:0005886">
    <property type="term" value="C:plasma membrane"/>
    <property type="evidence" value="ECO:0007669"/>
    <property type="project" value="UniProtKB-SubCell"/>
</dbReference>
<dbReference type="GO" id="GO:0016780">
    <property type="term" value="F:phosphotransferase activity, for other substituted phosphate groups"/>
    <property type="evidence" value="ECO:0007669"/>
    <property type="project" value="UniProtKB-UniRule"/>
</dbReference>
<dbReference type="GO" id="GO:0099621">
    <property type="term" value="F:undecaprenyl-phosphate 4-deoxy-4-formamido-L-arabinose transferase activity"/>
    <property type="evidence" value="ECO:0007669"/>
    <property type="project" value="UniProtKB-EC"/>
</dbReference>
<dbReference type="GO" id="GO:0036108">
    <property type="term" value="P:4-amino-4-deoxy-alpha-L-arabinopyranosyl undecaprenyl phosphate biosynthetic process"/>
    <property type="evidence" value="ECO:0007669"/>
    <property type="project" value="UniProtKB-UniRule"/>
</dbReference>
<dbReference type="GO" id="GO:0009245">
    <property type="term" value="P:lipid A biosynthetic process"/>
    <property type="evidence" value="ECO:0007669"/>
    <property type="project" value="UniProtKB-UniRule"/>
</dbReference>
<dbReference type="GO" id="GO:0009103">
    <property type="term" value="P:lipopolysaccharide biosynthetic process"/>
    <property type="evidence" value="ECO:0007669"/>
    <property type="project" value="UniProtKB-UniRule"/>
</dbReference>
<dbReference type="GO" id="GO:0046677">
    <property type="term" value="P:response to antibiotic"/>
    <property type="evidence" value="ECO:0007669"/>
    <property type="project" value="UniProtKB-KW"/>
</dbReference>
<dbReference type="CDD" id="cd04187">
    <property type="entry name" value="DPM1_like_bac"/>
    <property type="match status" value="1"/>
</dbReference>
<dbReference type="Gene3D" id="3.90.550.10">
    <property type="entry name" value="Spore Coat Polysaccharide Biosynthesis Protein SpsA, Chain A"/>
    <property type="match status" value="1"/>
</dbReference>
<dbReference type="HAMAP" id="MF_01164">
    <property type="entry name" value="ArnC_transfer"/>
    <property type="match status" value="1"/>
</dbReference>
<dbReference type="InterPro" id="IPR022857">
    <property type="entry name" value="ArnC_tfrase"/>
</dbReference>
<dbReference type="InterPro" id="IPR001173">
    <property type="entry name" value="Glyco_trans_2-like"/>
</dbReference>
<dbReference type="InterPro" id="IPR050256">
    <property type="entry name" value="Glycosyltransferase_2"/>
</dbReference>
<dbReference type="InterPro" id="IPR029044">
    <property type="entry name" value="Nucleotide-diphossugar_trans"/>
</dbReference>
<dbReference type="NCBIfam" id="NF007986">
    <property type="entry name" value="PRK10714.1"/>
    <property type="match status" value="1"/>
</dbReference>
<dbReference type="PANTHER" id="PTHR48090:SF3">
    <property type="entry name" value="UNDECAPRENYL-PHOSPHATE 4-DEOXY-4-FORMAMIDO-L-ARABINOSE TRANSFERASE"/>
    <property type="match status" value="1"/>
</dbReference>
<dbReference type="PANTHER" id="PTHR48090">
    <property type="entry name" value="UNDECAPRENYL-PHOSPHATE 4-DEOXY-4-FORMAMIDO-L-ARABINOSE TRANSFERASE-RELATED"/>
    <property type="match status" value="1"/>
</dbReference>
<dbReference type="Pfam" id="PF00535">
    <property type="entry name" value="Glycos_transf_2"/>
    <property type="match status" value="1"/>
</dbReference>
<dbReference type="SUPFAM" id="SSF53448">
    <property type="entry name" value="Nucleotide-diphospho-sugar transferases"/>
    <property type="match status" value="1"/>
</dbReference>
<proteinExistence type="inferred from homology"/>
<evidence type="ECO:0000255" key="1">
    <source>
        <dbReference type="HAMAP-Rule" id="MF_01164"/>
    </source>
</evidence>
<keyword id="KW-0046">Antibiotic resistance</keyword>
<keyword id="KW-0997">Cell inner membrane</keyword>
<keyword id="KW-1003">Cell membrane</keyword>
<keyword id="KW-0328">Glycosyltransferase</keyword>
<keyword id="KW-0441">Lipid A biosynthesis</keyword>
<keyword id="KW-0444">Lipid biosynthesis</keyword>
<keyword id="KW-0443">Lipid metabolism</keyword>
<keyword id="KW-0448">Lipopolysaccharide biosynthesis</keyword>
<keyword id="KW-0472">Membrane</keyword>
<keyword id="KW-0808">Transferase</keyword>
<keyword id="KW-0812">Transmembrane</keyword>
<keyword id="KW-1133">Transmembrane helix</keyword>
<gene>
    <name evidence="1" type="primary">arnC</name>
    <name type="ordered locus">Pfl01_2842</name>
</gene>
<protein>
    <recommendedName>
        <fullName evidence="1">Undecaprenyl-phosphate 4-deoxy-4-formamido-L-arabinose transferase</fullName>
        <ecNumber evidence="1">2.4.2.53</ecNumber>
    </recommendedName>
    <alternativeName>
        <fullName evidence="1">Undecaprenyl-phosphate Ara4FN transferase</fullName>
        <shortName evidence="1">Ara4FN transferase</shortName>
    </alternativeName>
</protein>
<accession>Q3KCC2</accession>
<feature type="chain" id="PRO_0000380268" description="Undecaprenyl-phosphate 4-deoxy-4-formamido-L-arabinose transferase">
    <location>
        <begin position="1"/>
        <end position="340"/>
    </location>
</feature>
<feature type="transmembrane region" description="Helical" evidence="1">
    <location>
        <begin position="235"/>
        <end position="255"/>
    </location>
</feature>
<feature type="transmembrane region" description="Helical" evidence="1">
    <location>
        <begin position="269"/>
        <end position="289"/>
    </location>
</feature>
<organism>
    <name type="scientific">Pseudomonas fluorescens (strain Pf0-1)</name>
    <dbReference type="NCBI Taxonomy" id="205922"/>
    <lineage>
        <taxon>Bacteria</taxon>
        <taxon>Pseudomonadati</taxon>
        <taxon>Pseudomonadota</taxon>
        <taxon>Gammaproteobacteria</taxon>
        <taxon>Pseudomonadales</taxon>
        <taxon>Pseudomonadaceae</taxon>
        <taxon>Pseudomonas</taxon>
    </lineage>
</organism>
<sequence>MRPYPIHCVSIVIPVYNEEDSLPELLRRTEAACKQLRHDYEIVLVDDGSRDASAQLLEEAASVVDSPFVAVILNRNYGQHAAIMAGFEQCKGDVVITLDADLQNPPEEIPRLVAEAEKGFDVVGTVRGNRQDSALRRYPSKLINLAVQRSTGVAMSDYGCMLRAYRRTIIDAMLACRERSTFIPILANSFARHTTEIPVAHAEREHGDSKYSPMRLINLMFDLITCMTTTPLRLLSIVGFAMAGLGVLFAAALIFMRLAFGAGWAGDGLFVLFAVLFVFTGGQFIGMGLLGEYLGRMYSDVRARPRFFIEKVLRGHPATPAPAITVDGLTSNSTSDQVLS</sequence>
<name>ARNC_PSEPF</name>